<organism>
    <name type="scientific">Vibrio campbellii (strain ATCC BAA-1116)</name>
    <dbReference type="NCBI Taxonomy" id="2902295"/>
    <lineage>
        <taxon>Bacteria</taxon>
        <taxon>Pseudomonadati</taxon>
        <taxon>Pseudomonadota</taxon>
        <taxon>Gammaproteobacteria</taxon>
        <taxon>Vibrionales</taxon>
        <taxon>Vibrionaceae</taxon>
        <taxon>Vibrio</taxon>
    </lineage>
</organism>
<evidence type="ECO:0000255" key="1">
    <source>
        <dbReference type="HAMAP-Rule" id="MF_00736"/>
    </source>
</evidence>
<evidence type="ECO:0000305" key="2"/>
<dbReference type="EMBL" id="CP000789">
    <property type="protein sequence ID" value="ABU69269.1"/>
    <property type="molecule type" value="Genomic_DNA"/>
</dbReference>
<dbReference type="RefSeq" id="WP_005451125.1">
    <property type="nucleotide sequence ID" value="NC_022269.1"/>
</dbReference>
<dbReference type="SMR" id="A7MXE5"/>
<dbReference type="GeneID" id="83583533"/>
<dbReference type="KEGG" id="vha:VIBHAR_00229"/>
<dbReference type="PATRIC" id="fig|338187.25.peg.2322"/>
<dbReference type="Proteomes" id="UP000008152">
    <property type="component" value="Chromosome I"/>
</dbReference>
<dbReference type="GO" id="GO:0022625">
    <property type="term" value="C:cytosolic large ribosomal subunit"/>
    <property type="evidence" value="ECO:0007669"/>
    <property type="project" value="TreeGrafter"/>
</dbReference>
<dbReference type="GO" id="GO:0070180">
    <property type="term" value="F:large ribosomal subunit rRNA binding"/>
    <property type="evidence" value="ECO:0007669"/>
    <property type="project" value="UniProtKB-UniRule"/>
</dbReference>
<dbReference type="GO" id="GO:0003735">
    <property type="term" value="F:structural constituent of ribosome"/>
    <property type="evidence" value="ECO:0007669"/>
    <property type="project" value="InterPro"/>
</dbReference>
<dbReference type="GO" id="GO:0006412">
    <property type="term" value="P:translation"/>
    <property type="evidence" value="ECO:0007669"/>
    <property type="project" value="UniProtKB-UniRule"/>
</dbReference>
<dbReference type="CDD" id="cd00349">
    <property type="entry name" value="Ribosomal_L11"/>
    <property type="match status" value="1"/>
</dbReference>
<dbReference type="FunFam" id="1.10.10.250:FF:000001">
    <property type="entry name" value="50S ribosomal protein L11"/>
    <property type="match status" value="1"/>
</dbReference>
<dbReference type="FunFam" id="3.30.1550.10:FF:000001">
    <property type="entry name" value="50S ribosomal protein L11"/>
    <property type="match status" value="1"/>
</dbReference>
<dbReference type="Gene3D" id="1.10.10.250">
    <property type="entry name" value="Ribosomal protein L11, C-terminal domain"/>
    <property type="match status" value="1"/>
</dbReference>
<dbReference type="Gene3D" id="3.30.1550.10">
    <property type="entry name" value="Ribosomal protein L11/L12, N-terminal domain"/>
    <property type="match status" value="1"/>
</dbReference>
<dbReference type="HAMAP" id="MF_00736">
    <property type="entry name" value="Ribosomal_uL11"/>
    <property type="match status" value="1"/>
</dbReference>
<dbReference type="InterPro" id="IPR000911">
    <property type="entry name" value="Ribosomal_uL11"/>
</dbReference>
<dbReference type="InterPro" id="IPR006519">
    <property type="entry name" value="Ribosomal_uL11_bac-typ"/>
</dbReference>
<dbReference type="InterPro" id="IPR020783">
    <property type="entry name" value="Ribosomal_uL11_C"/>
</dbReference>
<dbReference type="InterPro" id="IPR036769">
    <property type="entry name" value="Ribosomal_uL11_C_sf"/>
</dbReference>
<dbReference type="InterPro" id="IPR020785">
    <property type="entry name" value="Ribosomal_uL11_CS"/>
</dbReference>
<dbReference type="InterPro" id="IPR020784">
    <property type="entry name" value="Ribosomal_uL11_N"/>
</dbReference>
<dbReference type="InterPro" id="IPR036796">
    <property type="entry name" value="Ribosomal_uL11_N_sf"/>
</dbReference>
<dbReference type="NCBIfam" id="TIGR01632">
    <property type="entry name" value="L11_bact"/>
    <property type="match status" value="1"/>
</dbReference>
<dbReference type="PANTHER" id="PTHR11661">
    <property type="entry name" value="60S RIBOSOMAL PROTEIN L12"/>
    <property type="match status" value="1"/>
</dbReference>
<dbReference type="PANTHER" id="PTHR11661:SF1">
    <property type="entry name" value="LARGE RIBOSOMAL SUBUNIT PROTEIN UL11M"/>
    <property type="match status" value="1"/>
</dbReference>
<dbReference type="Pfam" id="PF00298">
    <property type="entry name" value="Ribosomal_L11"/>
    <property type="match status" value="1"/>
</dbReference>
<dbReference type="Pfam" id="PF03946">
    <property type="entry name" value="Ribosomal_L11_N"/>
    <property type="match status" value="1"/>
</dbReference>
<dbReference type="SMART" id="SM00649">
    <property type="entry name" value="RL11"/>
    <property type="match status" value="1"/>
</dbReference>
<dbReference type="SUPFAM" id="SSF54747">
    <property type="entry name" value="Ribosomal L11/L12e N-terminal domain"/>
    <property type="match status" value="1"/>
</dbReference>
<dbReference type="SUPFAM" id="SSF46906">
    <property type="entry name" value="Ribosomal protein L11, C-terminal domain"/>
    <property type="match status" value="1"/>
</dbReference>
<dbReference type="PROSITE" id="PS00359">
    <property type="entry name" value="RIBOSOMAL_L11"/>
    <property type="match status" value="1"/>
</dbReference>
<gene>
    <name evidence="1" type="primary">rplK</name>
    <name type="ordered locus">VIBHAR_00229</name>
</gene>
<name>RL11_VIBC1</name>
<proteinExistence type="inferred from homology"/>
<keyword id="KW-0488">Methylation</keyword>
<keyword id="KW-0687">Ribonucleoprotein</keyword>
<keyword id="KW-0689">Ribosomal protein</keyword>
<keyword id="KW-0694">RNA-binding</keyword>
<keyword id="KW-0699">rRNA-binding</keyword>
<reference key="1">
    <citation type="submission" date="2007-08" db="EMBL/GenBank/DDBJ databases">
        <authorList>
            <consortium name="The Vibrio harveyi Genome Sequencing Project"/>
            <person name="Bassler B."/>
            <person name="Clifton S.W."/>
            <person name="Fulton L."/>
            <person name="Delehaunty K."/>
            <person name="Fronick C."/>
            <person name="Harrison M."/>
            <person name="Markivic C."/>
            <person name="Fulton R."/>
            <person name="Tin-Wollam A.-M."/>
            <person name="Shah N."/>
            <person name="Pepin K."/>
            <person name="Nash W."/>
            <person name="Thiruvilangam P."/>
            <person name="Bhonagiri V."/>
            <person name="Waters C."/>
            <person name="Tu K.C."/>
            <person name="Irgon J."/>
            <person name="Wilson R.K."/>
        </authorList>
    </citation>
    <scope>NUCLEOTIDE SEQUENCE [LARGE SCALE GENOMIC DNA]</scope>
    <source>
        <strain>ATCC BAA-1116 / BB120</strain>
    </source>
</reference>
<accession>A7MXE5</accession>
<comment type="function">
    <text evidence="1">Forms part of the ribosomal stalk which helps the ribosome interact with GTP-bound translation factors.</text>
</comment>
<comment type="subunit">
    <text evidence="1">Part of the ribosomal stalk of the 50S ribosomal subunit. Interacts with L10 and the large rRNA to form the base of the stalk. L10 forms an elongated spine to which L12 dimers bind in a sequential fashion forming a multimeric L10(L12)X complex.</text>
</comment>
<comment type="PTM">
    <text evidence="1">One or more lysine residues are methylated.</text>
</comment>
<comment type="similarity">
    <text evidence="1">Belongs to the universal ribosomal protein uL11 family.</text>
</comment>
<feature type="chain" id="PRO_1000046292" description="Large ribosomal subunit protein uL11">
    <location>
        <begin position="1"/>
        <end position="142"/>
    </location>
</feature>
<protein>
    <recommendedName>
        <fullName evidence="1">Large ribosomal subunit protein uL11</fullName>
    </recommendedName>
    <alternativeName>
        <fullName evidence="2">50S ribosomal protein L11</fullName>
    </alternativeName>
</protein>
<sequence length="142" mass="14789">MAKKVEAYIKLQVAAGMANPSPPVGPALGQHGVNIMEFCKAFNAKTESLEKGLPTPVVITVYNDRSFTFVTKTPPAAVLLKKAAGVKSGSGRPNTEKVGTVTDAQIQEIAETKAADMTGADIEAMKRSIAGTARSMGLVVEG</sequence>